<evidence type="ECO:0000250" key="1"/>
<evidence type="ECO:0000255" key="2">
    <source>
        <dbReference type="PROSITE-ProRule" id="PRU00274"/>
    </source>
</evidence>
<evidence type="ECO:0000305" key="3"/>
<reference key="1">
    <citation type="journal article" date="1999" name="Mol. Biol. Evol.">
        <title>Concerted evolution within a trypsin gene cluster in Drosophila.</title>
        <authorList>
            <person name="Wang S."/>
            <person name="Magoulas C."/>
            <person name="Hickey D.A."/>
        </authorList>
    </citation>
    <scope>NUCLEOTIDE SEQUENCE [GENOMIC DNA]</scope>
</reference>
<protein>
    <recommendedName>
        <fullName>Trypsin alpha</fullName>
        <ecNumber>3.4.21.4</ecNumber>
    </recommendedName>
</protein>
<dbReference type="EC" id="3.4.21.4"/>
<dbReference type="EMBL" id="U40653">
    <property type="protein sequence ID" value="AAA83239.1"/>
    <property type="molecule type" value="Genomic_DNA"/>
</dbReference>
<dbReference type="SMR" id="P54624"/>
<dbReference type="MEROPS" id="S01.110"/>
<dbReference type="eggNOG" id="KOG3627">
    <property type="taxonomic scope" value="Eukaryota"/>
</dbReference>
<dbReference type="OrthoDB" id="10059102at2759"/>
<dbReference type="GO" id="GO:0005576">
    <property type="term" value="C:extracellular region"/>
    <property type="evidence" value="ECO:0007669"/>
    <property type="project" value="UniProtKB-SubCell"/>
</dbReference>
<dbReference type="GO" id="GO:0004252">
    <property type="term" value="F:serine-type endopeptidase activity"/>
    <property type="evidence" value="ECO:0007669"/>
    <property type="project" value="UniProtKB-EC"/>
</dbReference>
<dbReference type="GO" id="GO:0006508">
    <property type="term" value="P:proteolysis"/>
    <property type="evidence" value="ECO:0007669"/>
    <property type="project" value="UniProtKB-KW"/>
</dbReference>
<dbReference type="CDD" id="cd00190">
    <property type="entry name" value="Tryp_SPc"/>
    <property type="match status" value="1"/>
</dbReference>
<dbReference type="FunFam" id="2.40.10.10:FF:000077">
    <property type="entry name" value="Predicted protein"/>
    <property type="match status" value="1"/>
</dbReference>
<dbReference type="Gene3D" id="2.40.10.10">
    <property type="entry name" value="Trypsin-like serine proteases"/>
    <property type="match status" value="2"/>
</dbReference>
<dbReference type="InterPro" id="IPR050430">
    <property type="entry name" value="Peptidase_S1"/>
</dbReference>
<dbReference type="InterPro" id="IPR009003">
    <property type="entry name" value="Peptidase_S1_PA"/>
</dbReference>
<dbReference type="InterPro" id="IPR043504">
    <property type="entry name" value="Peptidase_S1_PA_chymotrypsin"/>
</dbReference>
<dbReference type="InterPro" id="IPR001314">
    <property type="entry name" value="Peptidase_S1A"/>
</dbReference>
<dbReference type="InterPro" id="IPR001254">
    <property type="entry name" value="Trypsin_dom"/>
</dbReference>
<dbReference type="InterPro" id="IPR018114">
    <property type="entry name" value="TRYPSIN_HIS"/>
</dbReference>
<dbReference type="InterPro" id="IPR033116">
    <property type="entry name" value="TRYPSIN_SER"/>
</dbReference>
<dbReference type="PANTHER" id="PTHR24276:SF91">
    <property type="entry name" value="AT26814P-RELATED"/>
    <property type="match status" value="1"/>
</dbReference>
<dbReference type="PANTHER" id="PTHR24276">
    <property type="entry name" value="POLYSERASE-RELATED"/>
    <property type="match status" value="1"/>
</dbReference>
<dbReference type="Pfam" id="PF00089">
    <property type="entry name" value="Trypsin"/>
    <property type="match status" value="1"/>
</dbReference>
<dbReference type="PRINTS" id="PR00722">
    <property type="entry name" value="CHYMOTRYPSIN"/>
</dbReference>
<dbReference type="SMART" id="SM00020">
    <property type="entry name" value="Tryp_SPc"/>
    <property type="match status" value="1"/>
</dbReference>
<dbReference type="SUPFAM" id="SSF50494">
    <property type="entry name" value="Trypsin-like serine proteases"/>
    <property type="match status" value="1"/>
</dbReference>
<dbReference type="PROSITE" id="PS50240">
    <property type="entry name" value="TRYPSIN_DOM"/>
    <property type="match status" value="1"/>
</dbReference>
<dbReference type="PROSITE" id="PS00134">
    <property type="entry name" value="TRYPSIN_HIS"/>
    <property type="match status" value="1"/>
</dbReference>
<dbReference type="PROSITE" id="PS00135">
    <property type="entry name" value="TRYPSIN_SER"/>
    <property type="match status" value="1"/>
</dbReference>
<name>TRYA_DROER</name>
<feature type="signal peptide" evidence="3">
    <location>
        <begin position="1"/>
        <end position="22"/>
    </location>
</feature>
<feature type="propeptide" id="PRO_0000028259" description="Activation peptide">
    <location>
        <begin position="23"/>
        <end position="30"/>
    </location>
</feature>
<feature type="chain" id="PRO_0000028260" description="Trypsin alpha">
    <location>
        <begin position="31"/>
        <end position="256"/>
    </location>
</feature>
<feature type="domain" description="Peptidase S1" evidence="2">
    <location>
        <begin position="31"/>
        <end position="254"/>
    </location>
</feature>
<feature type="active site" description="Charge relay system" evidence="1">
    <location>
        <position position="71"/>
    </location>
</feature>
<feature type="active site" description="Charge relay system" evidence="1">
    <location>
        <position position="116"/>
    </location>
</feature>
<feature type="active site" description="Charge relay system" evidence="1">
    <location>
        <position position="210"/>
    </location>
</feature>
<feature type="site" description="Required for specificity" evidence="1">
    <location>
        <position position="204"/>
    </location>
</feature>
<feature type="disulfide bond" evidence="2">
    <location>
        <begin position="56"/>
        <end position="72"/>
    </location>
</feature>
<feature type="disulfide bond" evidence="2">
    <location>
        <begin position="180"/>
        <end position="197"/>
    </location>
</feature>
<feature type="disulfide bond" evidence="2">
    <location>
        <begin position="206"/>
        <end position="230"/>
    </location>
</feature>
<proteinExistence type="inferred from homology"/>
<organism>
    <name type="scientific">Drosophila erecta</name>
    <name type="common">Fruit fly</name>
    <dbReference type="NCBI Taxonomy" id="7220"/>
    <lineage>
        <taxon>Eukaryota</taxon>
        <taxon>Metazoa</taxon>
        <taxon>Ecdysozoa</taxon>
        <taxon>Arthropoda</taxon>
        <taxon>Hexapoda</taxon>
        <taxon>Insecta</taxon>
        <taxon>Pterygota</taxon>
        <taxon>Neoptera</taxon>
        <taxon>Endopterygota</taxon>
        <taxon>Diptera</taxon>
        <taxon>Brachycera</taxon>
        <taxon>Muscomorpha</taxon>
        <taxon>Ephydroidea</taxon>
        <taxon>Drosophilidae</taxon>
        <taxon>Drosophila</taxon>
        <taxon>Sophophora</taxon>
    </lineage>
</organism>
<accession>P54624</accession>
<keyword id="KW-1015">Disulfide bond</keyword>
<keyword id="KW-0378">Hydrolase</keyword>
<keyword id="KW-0645">Protease</keyword>
<keyword id="KW-0964">Secreted</keyword>
<keyword id="KW-0720">Serine protease</keyword>
<keyword id="KW-0732">Signal</keyword>
<keyword id="KW-0865">Zymogen</keyword>
<gene>
    <name type="primary">alphaTry</name>
</gene>
<comment type="catalytic activity">
    <reaction>
        <text>Preferential cleavage: Arg-|-Xaa, Lys-|-Xaa.</text>
        <dbReference type="EC" id="3.4.21.4"/>
    </reaction>
</comment>
<comment type="subcellular location">
    <subcellularLocation>
        <location>Secreted</location>
        <location>Extracellular space</location>
    </subcellularLocation>
</comment>
<comment type="similarity">
    <text evidence="2">Belongs to the peptidase S1 family.</text>
</comment>
<sequence length="256" mass="25991">MLKIVILLSAVVCALGGTVPEGLLPQLDGRIVGGSATTISSFPWQISLQRSGSHSCGGSVYSANIIVTAAHCLQSVSASSLQVRAGSTYWSSGGVVAKVAAFRNHEGYNANTMVNDIAVIRLSSSLSFSSSIKAIALATYNPANGAAAAVSGWGTQSSGSNSIPSQLQYVNVNIVSQSKCASSAYGYGSEIRNTMICAAASGKDACQGDSGGPLVSGGVLVGVVSWGYGCAYSNYPGVYADVAVLRSWVISTANSI</sequence>